<sequence>MRCSVTKFFCSTAKKSQMVERVKDYMYKNDKLFELLDARILEMKEGYAKVEMVVKKEHLNAANVCHGGIIFSLADLAFALASNSHGKLALAIEVSITYMKAAYEGEKLVAEAKEVNLGNKTATYLMEVKNSANKLIALAKGTVYRVNEDFPPTS</sequence>
<proteinExistence type="inferred from homology"/>
<gene>
    <name type="ordered locus">AF_2264</name>
</gene>
<comment type="similarity">
    <text evidence="1">Belongs to the thioesterase PaaI family.</text>
</comment>
<dbReference type="EC" id="3.1.2.-"/>
<dbReference type="EMBL" id="AE000782">
    <property type="protein sequence ID" value="AAB88986.1"/>
    <property type="molecule type" value="Genomic_DNA"/>
</dbReference>
<dbReference type="PIR" id="H69532">
    <property type="entry name" value="H69532"/>
</dbReference>
<dbReference type="SMR" id="O28020"/>
<dbReference type="STRING" id="224325.AF_2264"/>
<dbReference type="PaxDb" id="224325-AF_2264"/>
<dbReference type="EnsemblBacteria" id="AAB88986">
    <property type="protein sequence ID" value="AAB88986"/>
    <property type="gene ID" value="AF_2264"/>
</dbReference>
<dbReference type="KEGG" id="afu:AF_2264"/>
<dbReference type="eggNOG" id="arCOG00777">
    <property type="taxonomic scope" value="Archaea"/>
</dbReference>
<dbReference type="HOGENOM" id="CLU_089876_11_2_2"/>
<dbReference type="PhylomeDB" id="O28020"/>
<dbReference type="Proteomes" id="UP000002199">
    <property type="component" value="Chromosome"/>
</dbReference>
<dbReference type="GO" id="GO:0016289">
    <property type="term" value="F:acyl-CoA hydrolase activity"/>
    <property type="evidence" value="ECO:0007669"/>
    <property type="project" value="TreeGrafter"/>
</dbReference>
<dbReference type="CDD" id="cd03443">
    <property type="entry name" value="PaaI_thioesterase"/>
    <property type="match status" value="1"/>
</dbReference>
<dbReference type="Gene3D" id="3.10.129.10">
    <property type="entry name" value="Hotdog Thioesterase"/>
    <property type="match status" value="1"/>
</dbReference>
<dbReference type="InterPro" id="IPR052723">
    <property type="entry name" value="Acyl-CoA_thioesterase_PaaI"/>
</dbReference>
<dbReference type="InterPro" id="IPR029069">
    <property type="entry name" value="HotDog_dom_sf"/>
</dbReference>
<dbReference type="InterPro" id="IPR011973">
    <property type="entry name" value="PaaD"/>
</dbReference>
<dbReference type="InterPro" id="IPR003736">
    <property type="entry name" value="PAAI_dom"/>
</dbReference>
<dbReference type="InterPro" id="IPR006683">
    <property type="entry name" value="Thioestr_dom"/>
</dbReference>
<dbReference type="NCBIfam" id="TIGR02286">
    <property type="entry name" value="PaaD"/>
    <property type="match status" value="1"/>
</dbReference>
<dbReference type="NCBIfam" id="TIGR00369">
    <property type="entry name" value="unchar_dom_1"/>
    <property type="match status" value="1"/>
</dbReference>
<dbReference type="PANTHER" id="PTHR42856">
    <property type="entry name" value="ACYL-COENZYME A THIOESTERASE PAAI"/>
    <property type="match status" value="1"/>
</dbReference>
<dbReference type="PANTHER" id="PTHR42856:SF1">
    <property type="entry name" value="ACYL-COENZYME A THIOESTERASE PAAI"/>
    <property type="match status" value="1"/>
</dbReference>
<dbReference type="Pfam" id="PF03061">
    <property type="entry name" value="4HBT"/>
    <property type="match status" value="1"/>
</dbReference>
<dbReference type="SUPFAM" id="SSF54637">
    <property type="entry name" value="Thioesterase/thiol ester dehydrase-isomerase"/>
    <property type="match status" value="1"/>
</dbReference>
<protein>
    <recommendedName>
        <fullName>Putative esterase AF_2264</fullName>
        <ecNumber>3.1.2.-</ecNumber>
    </recommendedName>
</protein>
<reference key="1">
    <citation type="journal article" date="1997" name="Nature">
        <title>The complete genome sequence of the hyperthermophilic, sulphate-reducing archaeon Archaeoglobus fulgidus.</title>
        <authorList>
            <person name="Klenk H.-P."/>
            <person name="Clayton R.A."/>
            <person name="Tomb J.-F."/>
            <person name="White O."/>
            <person name="Nelson K.E."/>
            <person name="Ketchum K.A."/>
            <person name="Dodson R.J."/>
            <person name="Gwinn M.L."/>
            <person name="Hickey E.K."/>
            <person name="Peterson J.D."/>
            <person name="Richardson D.L."/>
            <person name="Kerlavage A.R."/>
            <person name="Graham D.E."/>
            <person name="Kyrpides N.C."/>
            <person name="Fleischmann R.D."/>
            <person name="Quackenbush J."/>
            <person name="Lee N.H."/>
            <person name="Sutton G.G."/>
            <person name="Gill S.R."/>
            <person name="Kirkness E.F."/>
            <person name="Dougherty B.A."/>
            <person name="McKenney K."/>
            <person name="Adams M.D."/>
            <person name="Loftus B.J."/>
            <person name="Peterson S.N."/>
            <person name="Reich C.I."/>
            <person name="McNeil L.K."/>
            <person name="Badger J.H."/>
            <person name="Glodek A."/>
            <person name="Zhou L."/>
            <person name="Overbeek R."/>
            <person name="Gocayne J.D."/>
            <person name="Weidman J.F."/>
            <person name="McDonald L.A."/>
            <person name="Utterback T.R."/>
            <person name="Cotton M.D."/>
            <person name="Spriggs T."/>
            <person name="Artiach P."/>
            <person name="Kaine B.P."/>
            <person name="Sykes S.M."/>
            <person name="Sadow P.W."/>
            <person name="D'Andrea K.P."/>
            <person name="Bowman C."/>
            <person name="Fujii C."/>
            <person name="Garland S.A."/>
            <person name="Mason T.M."/>
            <person name="Olsen G.J."/>
            <person name="Fraser C.M."/>
            <person name="Smith H.O."/>
            <person name="Woese C.R."/>
            <person name="Venter J.C."/>
        </authorList>
    </citation>
    <scope>NUCLEOTIDE SEQUENCE [LARGE SCALE GENOMIC DNA]</scope>
    <source>
        <strain>ATCC 49558 / DSM 4304 / JCM 9628 / NBRC 100126 / VC-16</strain>
    </source>
</reference>
<evidence type="ECO:0000305" key="1"/>
<feature type="chain" id="PRO_0000156688" description="Putative esterase AF_2264">
    <location>
        <begin position="1"/>
        <end position="154"/>
    </location>
</feature>
<keyword id="KW-0378">Hydrolase</keyword>
<keyword id="KW-1185">Reference proteome</keyword>
<name>Y2264_ARCFU</name>
<accession>O28020</accession>
<organism>
    <name type="scientific">Archaeoglobus fulgidus (strain ATCC 49558 / DSM 4304 / JCM 9628 / NBRC 100126 / VC-16)</name>
    <dbReference type="NCBI Taxonomy" id="224325"/>
    <lineage>
        <taxon>Archaea</taxon>
        <taxon>Methanobacteriati</taxon>
        <taxon>Methanobacteriota</taxon>
        <taxon>Archaeoglobi</taxon>
        <taxon>Archaeoglobales</taxon>
        <taxon>Archaeoglobaceae</taxon>
        <taxon>Archaeoglobus</taxon>
    </lineage>
</organism>